<sequence>MKRTFQPSNLVRKRRHGFRSRMATPTGRAILRKRRAKGRHKLSA</sequence>
<keyword id="KW-0687">Ribonucleoprotein</keyword>
<keyword id="KW-0689">Ribosomal protein</keyword>
<protein>
    <recommendedName>
        <fullName evidence="1">Large ribosomal subunit protein bL34</fullName>
    </recommendedName>
    <alternativeName>
        <fullName evidence="3">50S ribosomal protein L34</fullName>
    </alternativeName>
</protein>
<gene>
    <name evidence="1" type="primary">rpmH</name>
    <name type="ordered locus">RAF_ORF0848</name>
</gene>
<comment type="similarity">
    <text evidence="1">Belongs to the bacterial ribosomal protein bL34 family.</text>
</comment>
<feature type="chain" id="PRO_1000205837" description="Large ribosomal subunit protein bL34">
    <location>
        <begin position="1"/>
        <end position="44"/>
    </location>
</feature>
<feature type="region of interest" description="Disordered" evidence="2">
    <location>
        <begin position="1"/>
        <end position="44"/>
    </location>
</feature>
<feature type="compositionally biased region" description="Basic residues" evidence="2">
    <location>
        <begin position="30"/>
        <end position="44"/>
    </location>
</feature>
<dbReference type="EMBL" id="CP001612">
    <property type="protein sequence ID" value="ACP53711.1"/>
    <property type="molecule type" value="Genomic_DNA"/>
</dbReference>
<dbReference type="RefSeq" id="WP_011270688.1">
    <property type="nucleotide sequence ID" value="NC_012633.1"/>
</dbReference>
<dbReference type="SMR" id="C3PP51"/>
<dbReference type="GeneID" id="34514635"/>
<dbReference type="KEGG" id="raf:RAF_ORF0848"/>
<dbReference type="HOGENOM" id="CLU_129938_2_0_5"/>
<dbReference type="Proteomes" id="UP000002305">
    <property type="component" value="Chromosome"/>
</dbReference>
<dbReference type="GO" id="GO:1990904">
    <property type="term" value="C:ribonucleoprotein complex"/>
    <property type="evidence" value="ECO:0007669"/>
    <property type="project" value="UniProtKB-KW"/>
</dbReference>
<dbReference type="GO" id="GO:0005840">
    <property type="term" value="C:ribosome"/>
    <property type="evidence" value="ECO:0007669"/>
    <property type="project" value="UniProtKB-KW"/>
</dbReference>
<dbReference type="GO" id="GO:0003735">
    <property type="term" value="F:structural constituent of ribosome"/>
    <property type="evidence" value="ECO:0007669"/>
    <property type="project" value="InterPro"/>
</dbReference>
<dbReference type="GO" id="GO:0006412">
    <property type="term" value="P:translation"/>
    <property type="evidence" value="ECO:0007669"/>
    <property type="project" value="UniProtKB-UniRule"/>
</dbReference>
<dbReference type="FunFam" id="1.10.287.3980:FF:000001">
    <property type="entry name" value="Mitochondrial ribosomal protein L34"/>
    <property type="match status" value="1"/>
</dbReference>
<dbReference type="Gene3D" id="1.10.287.3980">
    <property type="match status" value="1"/>
</dbReference>
<dbReference type="HAMAP" id="MF_00391">
    <property type="entry name" value="Ribosomal_bL34"/>
    <property type="match status" value="1"/>
</dbReference>
<dbReference type="InterPro" id="IPR000271">
    <property type="entry name" value="Ribosomal_bL34"/>
</dbReference>
<dbReference type="InterPro" id="IPR020939">
    <property type="entry name" value="Ribosomal_bL34_CS"/>
</dbReference>
<dbReference type="NCBIfam" id="TIGR01030">
    <property type="entry name" value="rpmH_bact"/>
    <property type="match status" value="1"/>
</dbReference>
<dbReference type="PANTHER" id="PTHR14503:SF4">
    <property type="entry name" value="LARGE RIBOSOMAL SUBUNIT PROTEIN BL34M"/>
    <property type="match status" value="1"/>
</dbReference>
<dbReference type="PANTHER" id="PTHR14503">
    <property type="entry name" value="MITOCHONDRIAL RIBOSOMAL PROTEIN 34 FAMILY MEMBER"/>
    <property type="match status" value="1"/>
</dbReference>
<dbReference type="Pfam" id="PF00468">
    <property type="entry name" value="Ribosomal_L34"/>
    <property type="match status" value="1"/>
</dbReference>
<dbReference type="PROSITE" id="PS00784">
    <property type="entry name" value="RIBOSOMAL_L34"/>
    <property type="match status" value="1"/>
</dbReference>
<organism>
    <name type="scientific">Rickettsia africae (strain ESF-5)</name>
    <dbReference type="NCBI Taxonomy" id="347255"/>
    <lineage>
        <taxon>Bacteria</taxon>
        <taxon>Pseudomonadati</taxon>
        <taxon>Pseudomonadota</taxon>
        <taxon>Alphaproteobacteria</taxon>
        <taxon>Rickettsiales</taxon>
        <taxon>Rickettsiaceae</taxon>
        <taxon>Rickettsieae</taxon>
        <taxon>Rickettsia</taxon>
        <taxon>spotted fever group</taxon>
    </lineage>
</organism>
<name>RL34_RICAE</name>
<reference key="1">
    <citation type="journal article" date="2009" name="BMC Genomics">
        <title>Analysis of the Rickettsia africae genome reveals that virulence acquisition in Rickettsia species may be explained by genome reduction.</title>
        <authorList>
            <person name="Fournier P.-E."/>
            <person name="El Karkouri K."/>
            <person name="Leroy Q."/>
            <person name="Robert C."/>
            <person name="Giumelli B."/>
            <person name="Renesto P."/>
            <person name="Socolovschi C."/>
            <person name="Parola P."/>
            <person name="Audic S."/>
            <person name="Raoult D."/>
        </authorList>
    </citation>
    <scope>NUCLEOTIDE SEQUENCE [LARGE SCALE GENOMIC DNA]</scope>
    <source>
        <strain>ESF-5</strain>
    </source>
</reference>
<evidence type="ECO:0000255" key="1">
    <source>
        <dbReference type="HAMAP-Rule" id="MF_00391"/>
    </source>
</evidence>
<evidence type="ECO:0000256" key="2">
    <source>
        <dbReference type="SAM" id="MobiDB-lite"/>
    </source>
</evidence>
<evidence type="ECO:0000305" key="3"/>
<accession>C3PP51</accession>
<proteinExistence type="inferred from homology"/>